<comment type="function">
    <text evidence="1">Produces ATP from ADP in the presence of a proton gradient across the membrane.</text>
</comment>
<comment type="subunit">
    <text evidence="1">F-type ATPases have 2 components, CF(1) - the catalytic core - and CF(0) - the membrane proton channel. CF(1) has five subunits: alpha(3), beta(3), gamma(1), delta(1), epsilon(1). CF(0) has three main subunits: a, b and c.</text>
</comment>
<comment type="subcellular location">
    <subcellularLocation>
        <location evidence="1">Plastid</location>
        <location evidence="1">Chloroplast thylakoid membrane</location>
        <topology evidence="1">Peripheral membrane protein</topology>
    </subcellularLocation>
</comment>
<comment type="similarity">
    <text evidence="1">Belongs to the ATPase epsilon chain family.</text>
</comment>
<evidence type="ECO:0000255" key="1">
    <source>
        <dbReference type="HAMAP-Rule" id="MF_00530"/>
    </source>
</evidence>
<name>ATPE_ORYSI</name>
<keyword id="KW-0066">ATP synthesis</keyword>
<keyword id="KW-0139">CF(1)</keyword>
<keyword id="KW-0150">Chloroplast</keyword>
<keyword id="KW-0375">Hydrogen ion transport</keyword>
<keyword id="KW-0406">Ion transport</keyword>
<keyword id="KW-0472">Membrane</keyword>
<keyword id="KW-0934">Plastid</keyword>
<keyword id="KW-1185">Reference proteome</keyword>
<keyword id="KW-0793">Thylakoid</keyword>
<keyword id="KW-0813">Transport</keyword>
<sequence length="137" mass="15218">MKLNLYVLTPKRIIWDCEVKEIILSTNSGQIGVLPNHAPINTAVDMGPLRIRLLNDQWLTAVLWSGFARIVNNEIIILGNDAELGSDIDPEEAQQALEIAEANVSRAEGTKELVEAKVALRRARIRVEAVNWIPPSN</sequence>
<dbReference type="EMBL" id="AY522329">
    <property type="protein sequence ID" value="AAS46060.1"/>
    <property type="molecule type" value="Genomic_DNA"/>
</dbReference>
<dbReference type="RefSeq" id="YP_009161370.1">
    <property type="nucleotide sequence ID" value="NC_027678.1"/>
</dbReference>
<dbReference type="RefSeq" id="YP_654220.1">
    <property type="nucleotide sequence ID" value="NC_008155.1"/>
</dbReference>
<dbReference type="SMR" id="P0C2Z2"/>
<dbReference type="STRING" id="39946.P0C2Z2"/>
<dbReference type="EnsemblPlants" id="OsLaMu_12g0010020.01">
    <property type="protein sequence ID" value="OsLaMu_12g0010020.01"/>
    <property type="gene ID" value="OsLaMu_12g0010020"/>
</dbReference>
<dbReference type="GeneID" id="4126870"/>
<dbReference type="Gramene" id="OsLaMu_12g0010020.01">
    <property type="protein sequence ID" value="OsLaMu_12g0010020.01"/>
    <property type="gene ID" value="OsLaMu_12g0010020"/>
</dbReference>
<dbReference type="Proteomes" id="UP000007015">
    <property type="component" value="Chloroplast"/>
</dbReference>
<dbReference type="GO" id="GO:0009535">
    <property type="term" value="C:chloroplast thylakoid membrane"/>
    <property type="evidence" value="ECO:0007669"/>
    <property type="project" value="UniProtKB-SubCell"/>
</dbReference>
<dbReference type="GO" id="GO:0009536">
    <property type="term" value="C:plastid"/>
    <property type="evidence" value="ECO:0000305"/>
    <property type="project" value="Gramene"/>
</dbReference>
<dbReference type="GO" id="GO:0045259">
    <property type="term" value="C:proton-transporting ATP synthase complex"/>
    <property type="evidence" value="ECO:0007669"/>
    <property type="project" value="UniProtKB-KW"/>
</dbReference>
<dbReference type="GO" id="GO:0005524">
    <property type="term" value="F:ATP binding"/>
    <property type="evidence" value="ECO:0007669"/>
    <property type="project" value="UniProtKB-UniRule"/>
</dbReference>
<dbReference type="GO" id="GO:0046933">
    <property type="term" value="F:proton-transporting ATP synthase activity, rotational mechanism"/>
    <property type="evidence" value="ECO:0007669"/>
    <property type="project" value="UniProtKB-UniRule"/>
</dbReference>
<dbReference type="CDD" id="cd12152">
    <property type="entry name" value="F1-ATPase_delta"/>
    <property type="match status" value="1"/>
</dbReference>
<dbReference type="FunFam" id="2.60.15.10:FF:000002">
    <property type="entry name" value="ATP synthase epsilon chain, chloroplastic"/>
    <property type="match status" value="1"/>
</dbReference>
<dbReference type="Gene3D" id="6.10.140.480">
    <property type="match status" value="1"/>
</dbReference>
<dbReference type="Gene3D" id="2.60.15.10">
    <property type="entry name" value="F0F1 ATP synthase delta/epsilon subunit, N-terminal"/>
    <property type="match status" value="1"/>
</dbReference>
<dbReference type="HAMAP" id="MF_00530">
    <property type="entry name" value="ATP_synth_epsil_bac"/>
    <property type="match status" value="1"/>
</dbReference>
<dbReference type="InterPro" id="IPR001469">
    <property type="entry name" value="ATP_synth_F1_dsu/esu"/>
</dbReference>
<dbReference type="InterPro" id="IPR020546">
    <property type="entry name" value="ATP_synth_F1_dsu/esu_N"/>
</dbReference>
<dbReference type="InterPro" id="IPR020547">
    <property type="entry name" value="ATP_synth_F1_esu_C"/>
</dbReference>
<dbReference type="InterPro" id="IPR036771">
    <property type="entry name" value="ATPsynth_dsu/esu_N"/>
</dbReference>
<dbReference type="NCBIfam" id="TIGR01216">
    <property type="entry name" value="ATP_synt_epsi"/>
    <property type="match status" value="1"/>
</dbReference>
<dbReference type="PANTHER" id="PTHR13822">
    <property type="entry name" value="ATP SYNTHASE DELTA/EPSILON CHAIN"/>
    <property type="match status" value="1"/>
</dbReference>
<dbReference type="PANTHER" id="PTHR13822:SF10">
    <property type="entry name" value="ATP SYNTHASE EPSILON CHAIN, CHLOROPLASTIC"/>
    <property type="match status" value="1"/>
</dbReference>
<dbReference type="Pfam" id="PF00401">
    <property type="entry name" value="ATP-synt_DE"/>
    <property type="match status" value="1"/>
</dbReference>
<dbReference type="Pfam" id="PF02823">
    <property type="entry name" value="ATP-synt_DE_N"/>
    <property type="match status" value="1"/>
</dbReference>
<dbReference type="SUPFAM" id="SSF51344">
    <property type="entry name" value="Epsilon subunit of F1F0-ATP synthase N-terminal domain"/>
    <property type="match status" value="1"/>
</dbReference>
<geneLocation type="chloroplast"/>
<feature type="chain" id="PRO_0000288518" description="ATP synthase epsilon chain, chloroplastic">
    <location>
        <begin position="1"/>
        <end position="137"/>
    </location>
</feature>
<organism>
    <name type="scientific">Oryza sativa subsp. indica</name>
    <name type="common">Rice</name>
    <dbReference type="NCBI Taxonomy" id="39946"/>
    <lineage>
        <taxon>Eukaryota</taxon>
        <taxon>Viridiplantae</taxon>
        <taxon>Streptophyta</taxon>
        <taxon>Embryophyta</taxon>
        <taxon>Tracheophyta</taxon>
        <taxon>Spermatophyta</taxon>
        <taxon>Magnoliopsida</taxon>
        <taxon>Liliopsida</taxon>
        <taxon>Poales</taxon>
        <taxon>Poaceae</taxon>
        <taxon>BOP clade</taxon>
        <taxon>Oryzoideae</taxon>
        <taxon>Oryzeae</taxon>
        <taxon>Oryzinae</taxon>
        <taxon>Oryza</taxon>
        <taxon>Oryza sativa</taxon>
    </lineage>
</organism>
<protein>
    <recommendedName>
        <fullName evidence="1">ATP synthase epsilon chain, chloroplastic</fullName>
    </recommendedName>
    <alternativeName>
        <fullName evidence="1">ATP synthase F1 sector epsilon subunit</fullName>
    </alternativeName>
    <alternativeName>
        <fullName evidence="1">F-ATPase epsilon subunit</fullName>
    </alternativeName>
</protein>
<reference key="1">
    <citation type="journal article" date="2004" name="Plant Physiol.">
        <title>A comparison of rice chloroplast genomes.</title>
        <authorList>
            <person name="Tang J."/>
            <person name="Xia H."/>
            <person name="Cao M."/>
            <person name="Zhang X."/>
            <person name="Zeng W."/>
            <person name="Hu S."/>
            <person name="Tong W."/>
            <person name="Wang J."/>
            <person name="Wang J."/>
            <person name="Yu J."/>
            <person name="Yang H."/>
            <person name="Zhu L."/>
        </authorList>
    </citation>
    <scope>NUCLEOTIDE SEQUENCE [LARGE SCALE GENOMIC DNA]</scope>
    <source>
        <strain>cv. 93-11</strain>
    </source>
</reference>
<gene>
    <name evidence="1" type="primary">atpE</name>
    <name type="ORF">9311059</name>
</gene>
<accession>P0C2Z2</accession>
<accession>P12086</accession>
<accession>Q6QY05</accession>
<accession>Q6QY69</accession>
<proteinExistence type="inferred from homology"/>